<sequence length="237" mass="26066">MGNSVMEKIKGGLVVSCQALEDEPLHSAFIMSKMALAAVQGGAVGIRANTAKDIRAIQSEIDVPIIGIYKKDYDDSDVFITPTLKEVREICETGVEIVAMDATTRKRPHNEDLKDILSAIRKEFPNTLFMADTASIEDVYYADSLGFDLIGTTLYGYTEETANKNISDDDFSHLKEVLKSTKRPVIAEGKIDSPSKARQVLTLGCYAVVVGGAVTRPQEITTRFTNEIQKIQEERGK</sequence>
<organism>
    <name type="scientific">Listeria monocytogenes serovar 1/2a (strain ATCC BAA-679 / EGD-e)</name>
    <dbReference type="NCBI Taxonomy" id="169963"/>
    <lineage>
        <taxon>Bacteria</taxon>
        <taxon>Bacillati</taxon>
        <taxon>Bacillota</taxon>
        <taxon>Bacilli</taxon>
        <taxon>Bacillales</taxon>
        <taxon>Listeriaceae</taxon>
        <taxon>Listeria</taxon>
    </lineage>
</organism>
<evidence type="ECO:0000255" key="1">
    <source>
        <dbReference type="HAMAP-Rule" id="MF_01235"/>
    </source>
</evidence>
<gene>
    <name evidence="1" type="primary">nanE</name>
    <name type="ordered locus">lmo2801</name>
</gene>
<reference key="1">
    <citation type="journal article" date="2001" name="Science">
        <title>Comparative genomics of Listeria species.</title>
        <authorList>
            <person name="Glaser P."/>
            <person name="Frangeul L."/>
            <person name="Buchrieser C."/>
            <person name="Rusniok C."/>
            <person name="Amend A."/>
            <person name="Baquero F."/>
            <person name="Berche P."/>
            <person name="Bloecker H."/>
            <person name="Brandt P."/>
            <person name="Chakraborty T."/>
            <person name="Charbit A."/>
            <person name="Chetouani F."/>
            <person name="Couve E."/>
            <person name="de Daruvar A."/>
            <person name="Dehoux P."/>
            <person name="Domann E."/>
            <person name="Dominguez-Bernal G."/>
            <person name="Duchaud E."/>
            <person name="Durant L."/>
            <person name="Dussurget O."/>
            <person name="Entian K.-D."/>
            <person name="Fsihi H."/>
            <person name="Garcia-del Portillo F."/>
            <person name="Garrido P."/>
            <person name="Gautier L."/>
            <person name="Goebel W."/>
            <person name="Gomez-Lopez N."/>
            <person name="Hain T."/>
            <person name="Hauf J."/>
            <person name="Jackson D."/>
            <person name="Jones L.-M."/>
            <person name="Kaerst U."/>
            <person name="Kreft J."/>
            <person name="Kuhn M."/>
            <person name="Kunst F."/>
            <person name="Kurapkat G."/>
            <person name="Madueno E."/>
            <person name="Maitournam A."/>
            <person name="Mata Vicente J."/>
            <person name="Ng E."/>
            <person name="Nedjari H."/>
            <person name="Nordsiek G."/>
            <person name="Novella S."/>
            <person name="de Pablos B."/>
            <person name="Perez-Diaz J.-C."/>
            <person name="Purcell R."/>
            <person name="Remmel B."/>
            <person name="Rose M."/>
            <person name="Schlueter T."/>
            <person name="Simoes N."/>
            <person name="Tierrez A."/>
            <person name="Vazquez-Boland J.-A."/>
            <person name="Voss H."/>
            <person name="Wehland J."/>
            <person name="Cossart P."/>
        </authorList>
    </citation>
    <scope>NUCLEOTIDE SEQUENCE [LARGE SCALE GENOMIC DNA]</scope>
    <source>
        <strain>ATCC BAA-679 / EGD-e</strain>
    </source>
</reference>
<name>NANE_LISMO</name>
<comment type="function">
    <text evidence="1">Converts N-acetylmannosamine-6-phosphate (ManNAc-6-P) to N-acetylglucosamine-6-phosphate (GlcNAc-6-P).</text>
</comment>
<comment type="catalytic activity">
    <reaction evidence="1">
        <text>an N-acyl-D-glucosamine 6-phosphate = an N-acyl-D-mannosamine 6-phosphate</text>
        <dbReference type="Rhea" id="RHEA:23932"/>
        <dbReference type="ChEBI" id="CHEBI:57599"/>
        <dbReference type="ChEBI" id="CHEBI:57666"/>
        <dbReference type="EC" id="5.1.3.9"/>
    </reaction>
</comment>
<comment type="pathway">
    <text evidence="1">Amino-sugar metabolism; N-acetylneuraminate degradation; D-fructose 6-phosphate from N-acetylneuraminate: step 3/5.</text>
</comment>
<comment type="similarity">
    <text evidence="1">Belongs to the NanE family.</text>
</comment>
<keyword id="KW-0119">Carbohydrate metabolism</keyword>
<keyword id="KW-0413">Isomerase</keyword>
<keyword id="KW-1185">Reference proteome</keyword>
<proteinExistence type="inferred from homology"/>
<accession>Q8Y3N4</accession>
<feature type="chain" id="PRO_0000179783" description="Putative N-acetylmannosamine-6-phosphate 2-epimerase">
    <location>
        <begin position="1"/>
        <end position="237"/>
    </location>
</feature>
<protein>
    <recommendedName>
        <fullName evidence="1">Putative N-acetylmannosamine-6-phosphate 2-epimerase</fullName>
        <ecNumber evidence="1">5.1.3.9</ecNumber>
    </recommendedName>
    <alternativeName>
        <fullName evidence="1">ManNAc-6-P epimerase</fullName>
    </alternativeName>
</protein>
<dbReference type="EC" id="5.1.3.9" evidence="1"/>
<dbReference type="EMBL" id="AL591984">
    <property type="protein sequence ID" value="CAD01014.1"/>
    <property type="molecule type" value="Genomic_DNA"/>
</dbReference>
<dbReference type="PIR" id="AH1424">
    <property type="entry name" value="AH1424"/>
</dbReference>
<dbReference type="RefSeq" id="NP_466323.1">
    <property type="nucleotide sequence ID" value="NC_003210.1"/>
</dbReference>
<dbReference type="RefSeq" id="WP_009930423.1">
    <property type="nucleotide sequence ID" value="NZ_CP149495.1"/>
</dbReference>
<dbReference type="SMR" id="Q8Y3N4"/>
<dbReference type="STRING" id="169963.gene:17595518"/>
<dbReference type="PaxDb" id="169963-lmo2801"/>
<dbReference type="EnsemblBacteria" id="CAD01014">
    <property type="protein sequence ID" value="CAD01014"/>
    <property type="gene ID" value="CAD01014"/>
</dbReference>
<dbReference type="GeneID" id="986720"/>
<dbReference type="KEGG" id="lmo:lmo2801"/>
<dbReference type="PATRIC" id="fig|169963.11.peg.2871"/>
<dbReference type="eggNOG" id="COG3010">
    <property type="taxonomic scope" value="Bacteria"/>
</dbReference>
<dbReference type="HOGENOM" id="CLU_086300_1_0_9"/>
<dbReference type="OrthoDB" id="9781704at2"/>
<dbReference type="PhylomeDB" id="Q8Y3N4"/>
<dbReference type="BioCyc" id="LMON169963:LMO2801-MONOMER"/>
<dbReference type="UniPathway" id="UPA00629">
    <property type="reaction ID" value="UER00682"/>
</dbReference>
<dbReference type="Proteomes" id="UP000000817">
    <property type="component" value="Chromosome"/>
</dbReference>
<dbReference type="GO" id="GO:0005829">
    <property type="term" value="C:cytosol"/>
    <property type="evidence" value="ECO:0000318"/>
    <property type="project" value="GO_Central"/>
</dbReference>
<dbReference type="GO" id="GO:0047465">
    <property type="term" value="F:N-acylglucosamine-6-phosphate 2-epimerase activity"/>
    <property type="evidence" value="ECO:0007669"/>
    <property type="project" value="UniProtKB-EC"/>
</dbReference>
<dbReference type="GO" id="GO:0005975">
    <property type="term" value="P:carbohydrate metabolic process"/>
    <property type="evidence" value="ECO:0007669"/>
    <property type="project" value="UniProtKB-UniRule"/>
</dbReference>
<dbReference type="GO" id="GO:0006053">
    <property type="term" value="P:N-acetylmannosamine catabolic process"/>
    <property type="evidence" value="ECO:0000318"/>
    <property type="project" value="GO_Central"/>
</dbReference>
<dbReference type="GO" id="GO:0019262">
    <property type="term" value="P:N-acetylneuraminate catabolic process"/>
    <property type="evidence" value="ECO:0000318"/>
    <property type="project" value="GO_Central"/>
</dbReference>
<dbReference type="CDD" id="cd04729">
    <property type="entry name" value="NanE"/>
    <property type="match status" value="1"/>
</dbReference>
<dbReference type="FunFam" id="3.20.20.70:FF:000035">
    <property type="entry name" value="Putative N-acetylmannosamine-6-phosphate 2-epimerase"/>
    <property type="match status" value="1"/>
</dbReference>
<dbReference type="Gene3D" id="3.20.20.70">
    <property type="entry name" value="Aldolase class I"/>
    <property type="match status" value="1"/>
</dbReference>
<dbReference type="HAMAP" id="MF_01235">
    <property type="entry name" value="ManNAc6P_epimer"/>
    <property type="match status" value="1"/>
</dbReference>
<dbReference type="InterPro" id="IPR013785">
    <property type="entry name" value="Aldolase_TIM"/>
</dbReference>
<dbReference type="InterPro" id="IPR007260">
    <property type="entry name" value="NanE"/>
</dbReference>
<dbReference type="InterPro" id="IPR011060">
    <property type="entry name" value="RibuloseP-bd_barrel"/>
</dbReference>
<dbReference type="NCBIfam" id="NF002231">
    <property type="entry name" value="PRK01130.1"/>
    <property type="match status" value="1"/>
</dbReference>
<dbReference type="PANTHER" id="PTHR36204">
    <property type="entry name" value="N-ACETYLMANNOSAMINE-6-PHOSPHATE 2-EPIMERASE-RELATED"/>
    <property type="match status" value="1"/>
</dbReference>
<dbReference type="PANTHER" id="PTHR36204:SF1">
    <property type="entry name" value="N-ACETYLMANNOSAMINE-6-PHOSPHATE 2-EPIMERASE-RELATED"/>
    <property type="match status" value="1"/>
</dbReference>
<dbReference type="Pfam" id="PF04131">
    <property type="entry name" value="NanE"/>
    <property type="match status" value="1"/>
</dbReference>
<dbReference type="SUPFAM" id="SSF51366">
    <property type="entry name" value="Ribulose-phoshate binding barrel"/>
    <property type="match status" value="1"/>
</dbReference>